<name>TTLL3_MOUSE</name>
<feature type="chain" id="PRO_0000326159" description="Tubulin monoglycylase TTLL3">
    <location>
        <begin position="1"/>
        <end position="927"/>
    </location>
</feature>
<feature type="domain" description="TTL" evidence="3">
    <location>
        <begin position="345"/>
        <end position="702"/>
    </location>
</feature>
<feature type="region of interest" description="Disordered" evidence="4">
    <location>
        <begin position="35"/>
        <end position="113"/>
    </location>
</feature>
<feature type="region of interest" description="Disordered" evidence="4">
    <location>
        <begin position="194"/>
        <end position="227"/>
    </location>
</feature>
<feature type="region of interest" description="Disordered" evidence="4">
    <location>
        <begin position="735"/>
        <end position="799"/>
    </location>
</feature>
<feature type="region of interest" description="Disordered" evidence="4">
    <location>
        <begin position="897"/>
        <end position="927"/>
    </location>
</feature>
<feature type="compositionally biased region" description="Polar residues" evidence="4">
    <location>
        <begin position="35"/>
        <end position="47"/>
    </location>
</feature>
<feature type="compositionally biased region" description="Acidic residues" evidence="4">
    <location>
        <begin position="216"/>
        <end position="226"/>
    </location>
</feature>
<feature type="compositionally biased region" description="Polar residues" evidence="4">
    <location>
        <begin position="752"/>
        <end position="769"/>
    </location>
</feature>
<feature type="compositionally biased region" description="Basic and acidic residues" evidence="4">
    <location>
        <begin position="776"/>
        <end position="788"/>
    </location>
</feature>
<feature type="compositionally biased region" description="Polar residues" evidence="4">
    <location>
        <begin position="916"/>
        <end position="927"/>
    </location>
</feature>
<feature type="binding site" evidence="1">
    <location>
        <position position="476"/>
    </location>
    <ligand>
        <name>ATP</name>
        <dbReference type="ChEBI" id="CHEBI:30616"/>
    </ligand>
</feature>
<feature type="binding site" evidence="1">
    <location>
        <begin position="482"/>
        <end position="483"/>
    </location>
    <ligand>
        <name>ATP</name>
        <dbReference type="ChEBI" id="CHEBI:30616"/>
    </ligand>
</feature>
<feature type="binding site" evidence="1">
    <location>
        <position position="482"/>
    </location>
    <ligand>
        <name>a protein</name>
        <dbReference type="ChEBI" id="CHEBI:16541"/>
    </ligand>
    <ligandPart>
        <name>L-glutamate residue</name>
        <dbReference type="ChEBI" id="CHEBI:29973"/>
        <note>L-glutamate acceptor residue in protein target</note>
    </ligandPart>
</feature>
<feature type="binding site" evidence="2">
    <location>
        <begin position="514"/>
        <end position="517"/>
    </location>
    <ligand>
        <name>ATP</name>
        <dbReference type="ChEBI" id="CHEBI:30616"/>
    </ligand>
</feature>
<feature type="binding site" evidence="1">
    <location>
        <begin position="527"/>
        <end position="529"/>
    </location>
    <ligand>
        <name>ATP</name>
        <dbReference type="ChEBI" id="CHEBI:30616"/>
    </ligand>
</feature>
<feature type="binding site" evidence="1">
    <location>
        <begin position="571"/>
        <end position="572"/>
    </location>
    <ligand>
        <name>ATP</name>
        <dbReference type="ChEBI" id="CHEBI:30616"/>
    </ligand>
</feature>
<feature type="binding site" evidence="1">
    <location>
        <position position="649"/>
    </location>
    <ligand>
        <name>Mg(2+)</name>
        <dbReference type="ChEBI" id="CHEBI:18420"/>
        <label>1</label>
    </ligand>
</feature>
<feature type="binding site" evidence="2">
    <location>
        <position position="662"/>
    </location>
    <ligand>
        <name>ATP</name>
        <dbReference type="ChEBI" id="CHEBI:30616"/>
    </ligand>
</feature>
<feature type="binding site" evidence="1">
    <location>
        <position position="662"/>
    </location>
    <ligand>
        <name>Mg(2+)</name>
        <dbReference type="ChEBI" id="CHEBI:18420"/>
        <label>1</label>
    </ligand>
</feature>
<feature type="binding site" evidence="1">
    <location>
        <position position="662"/>
    </location>
    <ligand>
        <name>Mg(2+)</name>
        <dbReference type="ChEBI" id="CHEBI:18420"/>
        <label>2</label>
    </ligand>
</feature>
<feature type="binding site" evidence="1">
    <location>
        <position position="664"/>
    </location>
    <ligand>
        <name>Mg(2+)</name>
        <dbReference type="ChEBI" id="CHEBI:18420"/>
        <label>2</label>
    </ligand>
</feature>
<feature type="site" description="Essential for specifying initiation versus elongation step of the polyglycylase activity" evidence="1">
    <location>
        <position position="482"/>
    </location>
</feature>
<feature type="splice variant" id="VSP_052722" description="In isoform 3." evidence="13">
    <location>
        <begin position="1"/>
        <end position="223"/>
    </location>
</feature>
<feature type="splice variant" id="VSP_052724" description="In isoform 2." evidence="12 13">
    <location>
        <begin position="1"/>
        <end position="148"/>
    </location>
</feature>
<feature type="splice variant" id="VSP_052723" description="In isoform 3." evidence="13">
    <original>EENEMFRESQLLDLDGFLEFDDLDGIHALM</original>
    <variation>MDTSSPFYAAGQGEASPPSLPVSISSPSLQ</variation>
    <location>
        <begin position="224"/>
        <end position="253"/>
    </location>
</feature>
<feature type="splice variant" id="VSP_052725" description="In isoform 2." evidence="12 13">
    <original>EDFWLTAARNVLKLVVKLEEKSQSISIQAREEEAPEDTQPKKQEKKLVTVSSDFVDEALSACQEHLSSIAHKDIDKDPNSPLYLSPDDWSQFLQRYYQIVH</original>
    <variation>GKGTPIPGLAPSCCLSHRGKEQASPCGLCNPSPFLLPMGLPFISQPWHSEKPREPGLYPVAGSRGGWVGSVWSLDKLLAGPGSTKGNGSLRQSKFLFQHGF</variation>
    <location>
        <begin position="335"/>
        <end position="435"/>
    </location>
</feature>
<feature type="splice variant" id="VSP_052726" description="In isoform 2." evidence="12 13">
    <location>
        <begin position="436"/>
        <end position="927"/>
    </location>
</feature>
<feature type="mutagenesis site" description="Loss of tubulin monoglycylation activity." evidence="8">
    <original>G</original>
    <variation>S</variation>
    <location>
        <position position="647"/>
    </location>
</feature>
<feature type="mutagenesis site" description="Loss of tubulin monoglycylation activity." evidence="8">
    <original>E</original>
    <variation>G</variation>
    <location>
        <position position="662"/>
    </location>
</feature>
<feature type="mutagenesis site" description="Loss of tubulin monoglycylation activity." evidence="8">
    <original>M</original>
    <variation>I</variation>
    <location>
        <position position="669"/>
    </location>
</feature>
<feature type="sequence conflict" description="In Ref. 2; BAC26459." evidence="15" ref="2">
    <original>D</original>
    <variation>N</variation>
    <location>
        <position position="214"/>
    </location>
</feature>
<feature type="sequence conflict" description="In Ref. 2; BAC26459." evidence="15" ref="2">
    <original>P</original>
    <variation>Q</variation>
    <location sequence="A4Q9E5-2">
        <position position="241"/>
    </location>
</feature>
<keyword id="KW-0025">Alternative splicing</keyword>
<keyword id="KW-0067">ATP-binding</keyword>
<keyword id="KW-0966">Cell projection</keyword>
<keyword id="KW-0969">Cilium</keyword>
<keyword id="KW-0963">Cytoplasm</keyword>
<keyword id="KW-0206">Cytoskeleton</keyword>
<keyword id="KW-0282">Flagellum</keyword>
<keyword id="KW-0436">Ligase</keyword>
<keyword id="KW-0460">Magnesium</keyword>
<keyword id="KW-0479">Metal-binding</keyword>
<keyword id="KW-0493">Microtubule</keyword>
<keyword id="KW-0547">Nucleotide-binding</keyword>
<keyword id="KW-1185">Reference proteome</keyword>
<reference key="1">
    <citation type="journal article" date="2007" name="Mol. Cell">
        <title>A targeted multienzyme mechanism for selective microtubule polyglutamylation.</title>
        <authorList>
            <person name="van Dijk J."/>
            <person name="Rogowski K."/>
            <person name="Miro J."/>
            <person name="Lacroix B."/>
            <person name="Edde B."/>
            <person name="Janke C."/>
        </authorList>
    </citation>
    <scope>NUCLEOTIDE SEQUENCE [MRNA] (ISOFORM 1)</scope>
    <scope>TISSUE SPECIFICITY</scope>
    <source>
        <strain evidence="21">C57BL/6J</strain>
        <tissue evidence="21">Testis</tissue>
    </source>
</reference>
<reference key="2">
    <citation type="journal article" date="2005" name="Science">
        <title>The transcriptional landscape of the mammalian genome.</title>
        <authorList>
            <person name="Carninci P."/>
            <person name="Kasukawa T."/>
            <person name="Katayama S."/>
            <person name="Gough J."/>
            <person name="Frith M.C."/>
            <person name="Maeda N."/>
            <person name="Oyama R."/>
            <person name="Ravasi T."/>
            <person name="Lenhard B."/>
            <person name="Wells C."/>
            <person name="Kodzius R."/>
            <person name="Shimokawa K."/>
            <person name="Bajic V.B."/>
            <person name="Brenner S.E."/>
            <person name="Batalov S."/>
            <person name="Forrest A.R."/>
            <person name="Zavolan M."/>
            <person name="Davis M.J."/>
            <person name="Wilming L.G."/>
            <person name="Aidinis V."/>
            <person name="Allen J.E."/>
            <person name="Ambesi-Impiombato A."/>
            <person name="Apweiler R."/>
            <person name="Aturaliya R.N."/>
            <person name="Bailey T.L."/>
            <person name="Bansal M."/>
            <person name="Baxter L."/>
            <person name="Beisel K.W."/>
            <person name="Bersano T."/>
            <person name="Bono H."/>
            <person name="Chalk A.M."/>
            <person name="Chiu K.P."/>
            <person name="Choudhary V."/>
            <person name="Christoffels A."/>
            <person name="Clutterbuck D.R."/>
            <person name="Crowe M.L."/>
            <person name="Dalla E."/>
            <person name="Dalrymple B.P."/>
            <person name="de Bono B."/>
            <person name="Della Gatta G."/>
            <person name="di Bernardo D."/>
            <person name="Down T."/>
            <person name="Engstrom P."/>
            <person name="Fagiolini M."/>
            <person name="Faulkner G."/>
            <person name="Fletcher C.F."/>
            <person name="Fukushima T."/>
            <person name="Furuno M."/>
            <person name="Futaki S."/>
            <person name="Gariboldi M."/>
            <person name="Georgii-Hemming P."/>
            <person name="Gingeras T.R."/>
            <person name="Gojobori T."/>
            <person name="Green R.E."/>
            <person name="Gustincich S."/>
            <person name="Harbers M."/>
            <person name="Hayashi Y."/>
            <person name="Hensch T.K."/>
            <person name="Hirokawa N."/>
            <person name="Hill D."/>
            <person name="Huminiecki L."/>
            <person name="Iacono M."/>
            <person name="Ikeo K."/>
            <person name="Iwama A."/>
            <person name="Ishikawa T."/>
            <person name="Jakt M."/>
            <person name="Kanapin A."/>
            <person name="Katoh M."/>
            <person name="Kawasawa Y."/>
            <person name="Kelso J."/>
            <person name="Kitamura H."/>
            <person name="Kitano H."/>
            <person name="Kollias G."/>
            <person name="Krishnan S.P."/>
            <person name="Kruger A."/>
            <person name="Kummerfeld S.K."/>
            <person name="Kurochkin I.V."/>
            <person name="Lareau L.F."/>
            <person name="Lazarevic D."/>
            <person name="Lipovich L."/>
            <person name="Liu J."/>
            <person name="Liuni S."/>
            <person name="McWilliam S."/>
            <person name="Madan Babu M."/>
            <person name="Madera M."/>
            <person name="Marchionni L."/>
            <person name="Matsuda H."/>
            <person name="Matsuzawa S."/>
            <person name="Miki H."/>
            <person name="Mignone F."/>
            <person name="Miyake S."/>
            <person name="Morris K."/>
            <person name="Mottagui-Tabar S."/>
            <person name="Mulder N."/>
            <person name="Nakano N."/>
            <person name="Nakauchi H."/>
            <person name="Ng P."/>
            <person name="Nilsson R."/>
            <person name="Nishiguchi S."/>
            <person name="Nishikawa S."/>
            <person name="Nori F."/>
            <person name="Ohara O."/>
            <person name="Okazaki Y."/>
            <person name="Orlando V."/>
            <person name="Pang K.C."/>
            <person name="Pavan W.J."/>
            <person name="Pavesi G."/>
            <person name="Pesole G."/>
            <person name="Petrovsky N."/>
            <person name="Piazza S."/>
            <person name="Reed J."/>
            <person name="Reid J.F."/>
            <person name="Ring B.Z."/>
            <person name="Ringwald M."/>
            <person name="Rost B."/>
            <person name="Ruan Y."/>
            <person name="Salzberg S.L."/>
            <person name="Sandelin A."/>
            <person name="Schneider C."/>
            <person name="Schoenbach C."/>
            <person name="Sekiguchi K."/>
            <person name="Semple C.A."/>
            <person name="Seno S."/>
            <person name="Sessa L."/>
            <person name="Sheng Y."/>
            <person name="Shibata Y."/>
            <person name="Shimada H."/>
            <person name="Shimada K."/>
            <person name="Silva D."/>
            <person name="Sinclair B."/>
            <person name="Sperling S."/>
            <person name="Stupka E."/>
            <person name="Sugiura K."/>
            <person name="Sultana R."/>
            <person name="Takenaka Y."/>
            <person name="Taki K."/>
            <person name="Tammoja K."/>
            <person name="Tan S.L."/>
            <person name="Tang S."/>
            <person name="Taylor M.S."/>
            <person name="Tegner J."/>
            <person name="Teichmann S.A."/>
            <person name="Ueda H.R."/>
            <person name="van Nimwegen E."/>
            <person name="Verardo R."/>
            <person name="Wei C.L."/>
            <person name="Yagi K."/>
            <person name="Yamanishi H."/>
            <person name="Zabarovsky E."/>
            <person name="Zhu S."/>
            <person name="Zimmer A."/>
            <person name="Hide W."/>
            <person name="Bult C."/>
            <person name="Grimmond S.M."/>
            <person name="Teasdale R.D."/>
            <person name="Liu E.T."/>
            <person name="Brusic V."/>
            <person name="Quackenbush J."/>
            <person name="Wahlestedt C."/>
            <person name="Mattick J.S."/>
            <person name="Hume D.A."/>
            <person name="Kai C."/>
            <person name="Sasaki D."/>
            <person name="Tomaru Y."/>
            <person name="Fukuda S."/>
            <person name="Kanamori-Katayama M."/>
            <person name="Suzuki M."/>
            <person name="Aoki J."/>
            <person name="Arakawa T."/>
            <person name="Iida J."/>
            <person name="Imamura K."/>
            <person name="Itoh M."/>
            <person name="Kato T."/>
            <person name="Kawaji H."/>
            <person name="Kawagashira N."/>
            <person name="Kawashima T."/>
            <person name="Kojima M."/>
            <person name="Kondo S."/>
            <person name="Konno H."/>
            <person name="Nakano K."/>
            <person name="Ninomiya N."/>
            <person name="Nishio T."/>
            <person name="Okada M."/>
            <person name="Plessy C."/>
            <person name="Shibata K."/>
            <person name="Shiraki T."/>
            <person name="Suzuki S."/>
            <person name="Tagami M."/>
            <person name="Waki K."/>
            <person name="Watahiki A."/>
            <person name="Okamura-Oho Y."/>
            <person name="Suzuki H."/>
            <person name="Kawai J."/>
            <person name="Hayashizaki Y."/>
        </authorList>
    </citation>
    <scope>NUCLEOTIDE SEQUENCE [LARGE SCALE MRNA] (ISOFORMS 2 AND 3)</scope>
    <source>
        <strain evidence="20">C57BL/6J</strain>
        <tissue evidence="19">Head</tissue>
        <tissue evidence="20">Thymus</tissue>
    </source>
</reference>
<reference key="3">
    <citation type="journal article" date="2004" name="Genome Res.">
        <title>The status, quality, and expansion of the NIH full-length cDNA project: the Mammalian Gene Collection (MGC).</title>
        <authorList>
            <consortium name="The MGC Project Team"/>
        </authorList>
    </citation>
    <scope>NUCLEOTIDE SEQUENCE [LARGE SCALE MRNA] (ISOFORM 2)</scope>
    <source>
        <strain evidence="18">Czech II</strain>
        <tissue evidence="18">Mammary tumor</tissue>
    </source>
</reference>
<reference key="4">
    <citation type="journal article" date="2009" name="Cell">
        <title>Evolutionary divergence of enzymatic mechanisms for posttranslational polyglycylation.</title>
        <authorList>
            <person name="Rogowski K."/>
            <person name="Juge F."/>
            <person name="van Dijk J."/>
            <person name="Wloga D."/>
            <person name="Strub J.-M."/>
            <person name="Levilliers N."/>
            <person name="Thomas D."/>
            <person name="Bre M.-H."/>
            <person name="Van Dorsselaer A."/>
            <person name="Gaertig J."/>
            <person name="Janke C."/>
        </authorList>
    </citation>
    <scope>FUNCTION</scope>
    <scope>CATALYTIC ACTIVITY</scope>
    <scope>SUBCELLULAR LOCATION</scope>
    <scope>MUTAGENESIS OF GLY-647; GLU-662 AND MET-669</scope>
</reference>
<reference key="5">
    <citation type="journal article" date="2013" name="J. Cell Biol.">
        <title>Tubulin glycylases and glutamylases have distinct functions in stabilization and motility of ependymal cilia.</title>
        <authorList>
            <person name="Bosch Grau M."/>
            <person name="Gonzalez Curto G."/>
            <person name="Rocha C."/>
            <person name="Magiera M.M."/>
            <person name="Marques Sousa P."/>
            <person name="Giordano T."/>
            <person name="Spassky N."/>
            <person name="Janke C."/>
        </authorList>
    </citation>
    <scope>FUNCTION</scope>
    <scope>TISSUE SPECIFICITY</scope>
    <scope>DISRUPTION PHENOTYPE</scope>
</reference>
<reference key="6">
    <citation type="journal article" date="2014" name="EMBO J.">
        <title>Tubulin glycylases are required for primary cilia, control of cell proliferation and tumor development in colon.</title>
        <authorList>
            <person name="Rocha C."/>
            <person name="Papon L."/>
            <person name="Cacheux W."/>
            <person name="Marques Sousa P."/>
            <person name="Lascano V."/>
            <person name="Tort O."/>
            <person name="Giordano T."/>
            <person name="Vacher S."/>
            <person name="Lemmers B."/>
            <person name="Mariani P."/>
            <person name="Meseure D."/>
            <person name="Medema J.P."/>
            <person name="Bieche I."/>
            <person name="Hahne M."/>
            <person name="Janke C."/>
        </authorList>
    </citation>
    <scope>FUNCTION</scope>
    <scope>TISSUE SPECIFICITY</scope>
    <scope>DISRUPTION PHENOTYPE</scope>
</reference>
<reference key="7">
    <citation type="journal article" date="2021" name="Science">
        <title>Tubulin glycylation controls axonemal dynein activity, flagellar beat, and male fertility.</title>
        <authorList>
            <person name="Gadadhar S."/>
            <person name="Alvarez Viar G."/>
            <person name="Hansen J.N."/>
            <person name="Gong A."/>
            <person name="Kostarev A."/>
            <person name="Ialy-Radio C."/>
            <person name="Leboucher S."/>
            <person name="Whitfield M."/>
            <person name="Ziyyat A."/>
            <person name="Toure A."/>
            <person name="Alvarez L."/>
            <person name="Pigino G."/>
            <person name="Janke C."/>
        </authorList>
    </citation>
    <scope>FUNCTION</scope>
    <scope>SUBCELLULAR LOCATION</scope>
    <scope>TISSUE SPECIFICITY</scope>
    <scope>DISRUPTION PHENOTYPE</scope>
</reference>
<comment type="function">
    <text evidence="2 8 9 10 11">Monoglycylase which modifies alpha- and beta-tubulin, adding a single glycine on the gamma-carboxyl groups of specific glutamate residues to generate monoglycine side chains within the C-terminal tail of tubulin (PubMed:19524510). Not involved in elongation step of the polyglycylation reaction (PubMed:19524510). Preferentially glycylates a beta-tail peptide over the alpha-tail, although shifts its preference toward alpha-tail as beta-tail glutamylation increases (By similarity). Competes with polyglutamylases for modification site on beta-tubulin substrate, thereby creating an anticorrelation between glycylation and glutamylation reactions (PubMed:33414192). Together with TTLL8, mediates microtubule glycylation of primary and motile cilia, which is essential for their stability and maintenance (PubMed:23897886, PubMed:25180231). Involved in microtubule glycylation of primary cilia in colon which controls cell proliferation of epithelial cells and plays an essential role in colon cancer development (PubMed:25180231). Together with TTLL8, glycylates sperm flagella which regulates axonemal dynein motor activity, thereby controlling flagellar beat, directional sperm swimming and male fertility (PubMed:33414192).</text>
</comment>
<comment type="catalytic activity">
    <reaction evidence="8">
        <text>L-glutamyl-[protein] + glycine + ATP = glycyl-L-glutamyl-[protein] + ADP + phosphate + H(+)</text>
        <dbReference type="Rhea" id="RHEA:67180"/>
        <dbReference type="Rhea" id="RHEA-COMP:10208"/>
        <dbReference type="Rhea" id="RHEA-COMP:17207"/>
        <dbReference type="ChEBI" id="CHEBI:15378"/>
        <dbReference type="ChEBI" id="CHEBI:29973"/>
        <dbReference type="ChEBI" id="CHEBI:30616"/>
        <dbReference type="ChEBI" id="CHEBI:43474"/>
        <dbReference type="ChEBI" id="CHEBI:57305"/>
        <dbReference type="ChEBI" id="CHEBI:167890"/>
        <dbReference type="ChEBI" id="CHEBI:456216"/>
    </reaction>
    <physiologicalReaction direction="left-to-right" evidence="16">
        <dbReference type="Rhea" id="RHEA:67181"/>
    </physiologicalReaction>
</comment>
<comment type="cofactor">
    <cofactor evidence="1">
        <name>Mg(2+)</name>
        <dbReference type="ChEBI" id="CHEBI:18420"/>
    </cofactor>
</comment>
<comment type="subcellular location">
    <subcellularLocation>
        <location evidence="8">Cytoplasm</location>
        <location evidence="8">Cytoskeleton</location>
    </subcellularLocation>
    <subcellularLocation>
        <location evidence="16">Cell projection</location>
        <location evidence="16">Cilium</location>
    </subcellularLocation>
    <subcellularLocation>
        <location evidence="16">Cytoplasm</location>
        <location evidence="16">Cytoskeleton</location>
        <location evidence="16">Cilium axoneme</location>
    </subcellularLocation>
    <subcellularLocation>
        <location evidence="17">Cytoplasm</location>
        <location evidence="17">Cytoskeleton</location>
        <location evidence="17">Flagellum axoneme</location>
    </subcellularLocation>
</comment>
<comment type="alternative products">
    <event type="alternative splicing"/>
    <isoform>
        <id>A4Q9E5-1</id>
        <name evidence="7">1</name>
        <sequence type="displayed"/>
    </isoform>
    <isoform>
        <id>A4Q9E5-2</id>
        <name evidence="5 6">2</name>
        <sequence type="described" ref="VSP_052724 VSP_052725 VSP_052726"/>
    </isoform>
    <isoform>
        <id>A4Q9E5-3</id>
        <name evidence="6">3</name>
        <sequence type="described" ref="VSP_052722 VSP_052723"/>
    </isoform>
</comment>
<comment type="tissue specificity">
    <text evidence="7 9 10 11">Highly expressed in brain and testis (PubMed:17499049, PubMed:25180231). Expressed in heart, kidney, liver, lung, muscle, spleen, trachea and colon (PubMed:17499049, PubMed:25180231, PubMed:33414192). Expressed in sperm flagellum (PubMed:33414192). In the brain, specifically expressed in ependymal cilia (PubMed:23897886).</text>
</comment>
<comment type="domain">
    <text evidence="2">Two conserved structural elements specific among monoglycylases, IS1 and IS2, are involved in glycyl chains initiation. Two conserved structural interfaces likely constitute the binding platforms for tubulin tail and microtubule.</text>
</comment>
<comment type="domain">
    <text evidence="1">Arg-482 is the main determinant for regioselectivity, which segregates between initiases and elongases in all tubulin--tyrosine ligase family. A glutamine residue at this position is found in elongases TTLL6, TTLL9, TTLL11, TTLL13, TTLL10 and favors glutamate-chain elongation, whereas an arginine residue is found in initiases TTLL2, TTLL4, TTLL5, TTLL3, TTLL8 and favors initiation.</text>
</comment>
<comment type="disruption phenotype">
    <text evidence="9 10 11">In knockout mice, colon epithelium shows absence of glycylation, a reduced number of primary cilia accompanied by an increased rate of cell division (PubMed:25180231). Knockout mice show no visible motile ependymal cilia phenotype (PubMed:23897886). Simultaneous TTLL3 and TTLL8 knockout mice are subfertile owing to aberrant beat patterns of their sperm flagella, which impeded the straight swimming of sperm cells (PubMed:33414192). Simultaneous TTLL3 and TTLL8 knockout mice show no visible motile ependymal cilia phenotype in brain ventricles (PubMed:33414192).</text>
</comment>
<comment type="caution">
    <text evidence="9 11">TTLL3 and TTLL8 monoglycylase-mediated glycylation of tubulin was initially reported to play a role in ependymal motile ciliary maintenance (PubMed:23897886). However, contradictory results were later observed (PubMed:33414192).</text>
</comment>
<protein>
    <recommendedName>
        <fullName evidence="14">Tubulin monoglycylase TTLL3</fullName>
        <ecNumber evidence="8">6.3.2.-</ecNumber>
    </recommendedName>
    <alternativeName>
        <fullName evidence="14">Tubulin--tyrosine ligase-like protein 3</fullName>
    </alternativeName>
</protein>
<proteinExistence type="evidence at protein level"/>
<evidence type="ECO:0000250" key="1">
    <source>
        <dbReference type="UniProtKB" id="A4Q9E8"/>
    </source>
</evidence>
<evidence type="ECO:0000250" key="2">
    <source>
        <dbReference type="UniProtKB" id="B2GUB3"/>
    </source>
</evidence>
<evidence type="ECO:0000255" key="3">
    <source>
        <dbReference type="PROSITE-ProRule" id="PRU00568"/>
    </source>
</evidence>
<evidence type="ECO:0000256" key="4">
    <source>
        <dbReference type="SAM" id="MobiDB-lite"/>
    </source>
</evidence>
<evidence type="ECO:0000269" key="5">
    <source>
    </source>
</evidence>
<evidence type="ECO:0000269" key="6">
    <source>
    </source>
</evidence>
<evidence type="ECO:0000269" key="7">
    <source>
    </source>
</evidence>
<evidence type="ECO:0000269" key="8">
    <source>
    </source>
</evidence>
<evidence type="ECO:0000269" key="9">
    <source>
    </source>
</evidence>
<evidence type="ECO:0000269" key="10">
    <source>
    </source>
</evidence>
<evidence type="ECO:0000269" key="11">
    <source>
    </source>
</evidence>
<evidence type="ECO:0000303" key="12">
    <source>
    </source>
</evidence>
<evidence type="ECO:0000303" key="13">
    <source>
    </source>
</evidence>
<evidence type="ECO:0000303" key="14">
    <source>
    </source>
</evidence>
<evidence type="ECO:0000305" key="15"/>
<evidence type="ECO:0000305" key="16">
    <source>
    </source>
</evidence>
<evidence type="ECO:0000305" key="17">
    <source>
    </source>
</evidence>
<evidence type="ECO:0000312" key="18">
    <source>
        <dbReference type="EMBL" id="AAH21404.1"/>
    </source>
</evidence>
<evidence type="ECO:0000312" key="19">
    <source>
        <dbReference type="EMBL" id="BAC26459.1"/>
    </source>
</evidence>
<evidence type="ECO:0000312" key="20">
    <source>
        <dbReference type="EMBL" id="BAC37878.1"/>
    </source>
</evidence>
<evidence type="ECO:0000312" key="21">
    <source>
        <dbReference type="EMBL" id="CAM84323.1"/>
    </source>
</evidence>
<evidence type="ECO:0000312" key="22">
    <source>
        <dbReference type="MGI" id="MGI:2141418"/>
    </source>
</evidence>
<sequence length="927" mass="104428">MQGVSSALLLSAGQLGPGAAWYRQEGSSECSWLRRSQPSELRTNFSSRWPWPRNSESRRSERLQWPGPASAKPEVASCGDSRRDYSSLPARHLSSARESSMPGALGTVNPQPVRTLVPPTLDEPLPDALRPPDDSLLLWRGLTKGPNHMGRLRNAKIHVERAVKQKKIFMIHGRYPVIRCLLRQRGWVEKKMVHPPGTALPAPQKDLDSSMLGDSDATEDEDEEENEMFRESQLLDLDGFLEFDDLDGIHALMSRMVRNETPYLIWTTRRDVLDCRFLSKDQMINHYARAGSFTTKVGLCLNLRNLPWFDEADADSFFPRCYRLGAEDDKKAFIEDFWLTAARNVLKLVVKLEEKSQSISIQAREEEAPEDTQPKKQEKKLVTVSSDFVDEALSACQEHLSSIAHKDIDKDPNSPLYLSPDDWSQFLQRYYQIVHEGAELRYLEVQVQRCEDILQQLQNVVPQLDMEGDRNIWIVKPGAKSRGRGIMCMNRLDEMLKLVDCNPMLMKDGKWIVQKYIERPLLIFGTKFDLRQWFLVTDWNPLTVWFYRDSYIRFSTQPFSLKNLDNSVHLCNNSIQRHLEASCHRHPMLPPDNMWSSQRFQAHLQEVDAPKAWSSVIVPGMKAAVIHALQTSQDNVQCRKASFELYGADFVFGEDFQPWLIEINASPTMAPSTAVTARLCAGVQADTLRVVIDRRLDRSCDTGAFELIYKQPAVEVPQYVGIRLLVEGSTIKKPVPVGHRRTGVRSSLPHLLTQQGSGESKDSGSPTHRSASRKNARAESLEHTEKPEPAAVASVSGKGKKAPFHFPSLHSKAWLPSPRVHRPQGRVLRLQHDQLVGSKALSTTGKALMTLPTAKVLMSFPPHPDLKLAPSMLKPGKVGFELCCTTWRVVLSGGIGEEGHRQRAAPRPSSAPGKGLSSTEPCSKTET</sequence>
<gene>
    <name evidence="21 22" type="primary">Ttll3</name>
</gene>
<accession>A4Q9E5</accession>
<accession>Q8BV51</accession>
<accession>Q8C0Y7</accession>
<accession>Q8VDS2</accession>
<dbReference type="EC" id="6.3.2.-" evidence="8"/>
<dbReference type="EMBL" id="AM690746">
    <property type="protein sequence ID" value="CAM84323.1"/>
    <property type="molecule type" value="mRNA"/>
</dbReference>
<dbReference type="EMBL" id="AK029462">
    <property type="protein sequence ID" value="BAC26459.1"/>
    <property type="molecule type" value="mRNA"/>
</dbReference>
<dbReference type="EMBL" id="AK080321">
    <property type="protein sequence ID" value="BAC37878.1"/>
    <property type="molecule type" value="mRNA"/>
</dbReference>
<dbReference type="EMBL" id="BC021404">
    <property type="protein sequence ID" value="AAH21404.1"/>
    <property type="molecule type" value="mRNA"/>
</dbReference>
<dbReference type="CCDS" id="CCDS39593.2">
    <molecule id="A4Q9E5-1"/>
</dbReference>
<dbReference type="CCDS" id="CCDS85118.1">
    <molecule id="A4Q9E5-2"/>
</dbReference>
<dbReference type="RefSeq" id="NP_001136204.1">
    <molecule id="A4Q9E5-2"/>
    <property type="nucleotide sequence ID" value="NM_001142732.1"/>
</dbReference>
<dbReference type="RefSeq" id="NP_598684.4">
    <molecule id="A4Q9E5-1"/>
    <property type="nucleotide sequence ID" value="NM_133923.6"/>
</dbReference>
<dbReference type="SMR" id="A4Q9E5"/>
<dbReference type="FunCoup" id="A4Q9E5">
    <property type="interactions" value="164"/>
</dbReference>
<dbReference type="IntAct" id="A4Q9E5">
    <property type="interactions" value="1"/>
</dbReference>
<dbReference type="STRING" id="10090.ENSMUSP00000032414"/>
<dbReference type="GlyGen" id="A4Q9E5">
    <property type="glycosylation" value="1 site, 1 O-linked glycan (1 site)"/>
</dbReference>
<dbReference type="iPTMnet" id="A4Q9E5"/>
<dbReference type="PhosphoSitePlus" id="A4Q9E5"/>
<dbReference type="PaxDb" id="10090-ENSMUSP00000032414"/>
<dbReference type="ProteomicsDB" id="298014">
    <molecule id="A4Q9E5-1"/>
</dbReference>
<dbReference type="ProteomicsDB" id="298016">
    <molecule id="A4Q9E5-3"/>
</dbReference>
<dbReference type="Antibodypedia" id="74193">
    <property type="antibodies" value="3 antibodies from 3 providers"/>
</dbReference>
<dbReference type="Ensembl" id="ENSMUST00000032414.11">
    <molecule id="A4Q9E5-1"/>
    <property type="protein sequence ID" value="ENSMUSP00000032414.5"/>
    <property type="gene ID" value="ENSMUSG00000030276.20"/>
</dbReference>
<dbReference type="Ensembl" id="ENSMUST00000204026.3">
    <molecule id="A4Q9E5-2"/>
    <property type="protein sequence ID" value="ENSMUSP00000145049.2"/>
    <property type="gene ID" value="ENSMUSG00000030276.20"/>
</dbReference>
<dbReference type="GeneID" id="101100"/>
<dbReference type="KEGG" id="mmu:101100"/>
<dbReference type="UCSC" id="uc009dfu.2">
    <molecule id="A4Q9E5-2"/>
    <property type="organism name" value="mouse"/>
</dbReference>
<dbReference type="UCSC" id="uc009dfv.2">
    <molecule id="A4Q9E5-1"/>
    <property type="organism name" value="mouse"/>
</dbReference>
<dbReference type="UCSC" id="uc009dfw.1">
    <molecule id="A4Q9E5-3"/>
    <property type="organism name" value="mouse"/>
</dbReference>
<dbReference type="AGR" id="MGI:2141418"/>
<dbReference type="CTD" id="26140"/>
<dbReference type="MGI" id="MGI:2141418">
    <property type="gene designation" value="Ttll3"/>
</dbReference>
<dbReference type="VEuPathDB" id="HostDB:ENSMUSG00000030276"/>
<dbReference type="eggNOG" id="KOG2157">
    <property type="taxonomic scope" value="Eukaryota"/>
</dbReference>
<dbReference type="GeneTree" id="ENSGT00940000154857"/>
<dbReference type="InParanoid" id="A4Q9E5"/>
<dbReference type="OMA" id="SHHMGRL"/>
<dbReference type="OrthoDB" id="69037at9989"/>
<dbReference type="PhylomeDB" id="A4Q9E5"/>
<dbReference type="TreeFam" id="TF313087"/>
<dbReference type="Reactome" id="R-MMU-8955332">
    <property type="pathway name" value="Carboxyterminal post-translational modifications of tubulin"/>
</dbReference>
<dbReference type="BioGRID-ORCS" id="101100">
    <property type="hits" value="2 hits in 78 CRISPR screens"/>
</dbReference>
<dbReference type="ChiTaRS" id="Ttll3">
    <property type="organism name" value="mouse"/>
</dbReference>
<dbReference type="PRO" id="PR:A4Q9E5"/>
<dbReference type="Proteomes" id="UP000000589">
    <property type="component" value="Chromosome 6"/>
</dbReference>
<dbReference type="RNAct" id="A4Q9E5">
    <property type="molecule type" value="protein"/>
</dbReference>
<dbReference type="Bgee" id="ENSMUSG00000030276">
    <property type="expression patterns" value="Expressed in granulocyte and 149 other cell types or tissues"/>
</dbReference>
<dbReference type="ExpressionAtlas" id="A4Q9E5">
    <property type="expression patterns" value="baseline and differential"/>
</dbReference>
<dbReference type="GO" id="GO:0005930">
    <property type="term" value="C:axoneme"/>
    <property type="evidence" value="ECO:0000314"/>
    <property type="project" value="UniProtKB"/>
</dbReference>
<dbReference type="GO" id="GO:0005929">
    <property type="term" value="C:cilium"/>
    <property type="evidence" value="ECO:0000314"/>
    <property type="project" value="UniProtKB"/>
</dbReference>
<dbReference type="GO" id="GO:0005874">
    <property type="term" value="C:microtubule"/>
    <property type="evidence" value="ECO:0007669"/>
    <property type="project" value="UniProtKB-KW"/>
</dbReference>
<dbReference type="GO" id="GO:0015630">
    <property type="term" value="C:microtubule cytoskeleton"/>
    <property type="evidence" value="ECO:0000314"/>
    <property type="project" value="UniProtKB"/>
</dbReference>
<dbReference type="GO" id="GO:0036126">
    <property type="term" value="C:sperm flagellum"/>
    <property type="evidence" value="ECO:0000314"/>
    <property type="project" value="UniProtKB"/>
</dbReference>
<dbReference type="GO" id="GO:0005524">
    <property type="term" value="F:ATP binding"/>
    <property type="evidence" value="ECO:0007669"/>
    <property type="project" value="UniProtKB-KW"/>
</dbReference>
<dbReference type="GO" id="GO:0046872">
    <property type="term" value="F:metal ion binding"/>
    <property type="evidence" value="ECO:0007669"/>
    <property type="project" value="UniProtKB-KW"/>
</dbReference>
<dbReference type="GO" id="GO:0070735">
    <property type="term" value="F:protein-glycine ligase activity"/>
    <property type="evidence" value="ECO:0000314"/>
    <property type="project" value="UniProtKB"/>
</dbReference>
<dbReference type="GO" id="GO:0070736">
    <property type="term" value="F:protein-glycine ligase activity, initiating"/>
    <property type="evidence" value="ECO:0000314"/>
    <property type="project" value="UniProtKB"/>
</dbReference>
<dbReference type="GO" id="GO:0035082">
    <property type="term" value="P:axoneme assembly"/>
    <property type="evidence" value="ECO:0000250"/>
    <property type="project" value="UniProtKB"/>
</dbReference>
<dbReference type="GO" id="GO:0060271">
    <property type="term" value="P:cilium assembly"/>
    <property type="evidence" value="ECO:0000316"/>
    <property type="project" value="MGI"/>
</dbReference>
<dbReference type="GO" id="GO:0030317">
    <property type="term" value="P:flagellated sperm motility"/>
    <property type="evidence" value="ECO:0000315"/>
    <property type="project" value="UniProtKB"/>
</dbReference>
<dbReference type="GO" id="GO:0018094">
    <property type="term" value="P:protein polyglycylation"/>
    <property type="evidence" value="ECO:0000314"/>
    <property type="project" value="UniProtKB"/>
</dbReference>
<dbReference type="FunFam" id="3.30.470.20:FF:000032">
    <property type="entry name" value="tubulin monoglycylase TTLL3 isoform X2"/>
    <property type="match status" value="1"/>
</dbReference>
<dbReference type="Gene3D" id="3.30.470.20">
    <property type="entry name" value="ATP-grasp fold, B domain"/>
    <property type="match status" value="1"/>
</dbReference>
<dbReference type="InterPro" id="IPR004344">
    <property type="entry name" value="TTL/TTLL_fam"/>
</dbReference>
<dbReference type="InterPro" id="IPR051437">
    <property type="entry name" value="TTLL_monoglycylase"/>
</dbReference>
<dbReference type="PANTHER" id="PTHR45870">
    <property type="entry name" value="TUBULIN MONOGLYCYLASE TTLL3"/>
    <property type="match status" value="1"/>
</dbReference>
<dbReference type="PANTHER" id="PTHR45870:SF1">
    <property type="entry name" value="TUBULIN MONOGLYCYLASE TTLL3"/>
    <property type="match status" value="1"/>
</dbReference>
<dbReference type="Pfam" id="PF03133">
    <property type="entry name" value="TTL"/>
    <property type="match status" value="1"/>
</dbReference>
<dbReference type="SUPFAM" id="SSF56059">
    <property type="entry name" value="Glutathione synthetase ATP-binding domain-like"/>
    <property type="match status" value="1"/>
</dbReference>
<dbReference type="PROSITE" id="PS51221">
    <property type="entry name" value="TTL"/>
    <property type="match status" value="1"/>
</dbReference>
<organism>
    <name type="scientific">Mus musculus</name>
    <name type="common">Mouse</name>
    <dbReference type="NCBI Taxonomy" id="10090"/>
    <lineage>
        <taxon>Eukaryota</taxon>
        <taxon>Metazoa</taxon>
        <taxon>Chordata</taxon>
        <taxon>Craniata</taxon>
        <taxon>Vertebrata</taxon>
        <taxon>Euteleostomi</taxon>
        <taxon>Mammalia</taxon>
        <taxon>Eutheria</taxon>
        <taxon>Euarchontoglires</taxon>
        <taxon>Glires</taxon>
        <taxon>Rodentia</taxon>
        <taxon>Myomorpha</taxon>
        <taxon>Muroidea</taxon>
        <taxon>Muridae</taxon>
        <taxon>Murinae</taxon>
        <taxon>Mus</taxon>
        <taxon>Mus</taxon>
    </lineage>
</organism>